<dbReference type="EC" id="3.5.3.8" evidence="1"/>
<dbReference type="EMBL" id="CP000829">
    <property type="protein sequence ID" value="ACI61982.1"/>
    <property type="molecule type" value="Genomic_DNA"/>
</dbReference>
<dbReference type="SMR" id="B5XIY3"/>
<dbReference type="KEGG" id="soz:Spy49_1731"/>
<dbReference type="HOGENOM" id="CLU_039478_2_0_9"/>
<dbReference type="UniPathway" id="UPA00379">
    <property type="reaction ID" value="UER00552"/>
</dbReference>
<dbReference type="Proteomes" id="UP000001039">
    <property type="component" value="Chromosome"/>
</dbReference>
<dbReference type="GO" id="GO:0008783">
    <property type="term" value="F:agmatinase activity"/>
    <property type="evidence" value="ECO:0007669"/>
    <property type="project" value="TreeGrafter"/>
</dbReference>
<dbReference type="GO" id="GO:0050415">
    <property type="term" value="F:formimidoylglutamase activity"/>
    <property type="evidence" value="ECO:0007669"/>
    <property type="project" value="UniProtKB-UniRule"/>
</dbReference>
<dbReference type="GO" id="GO:0030145">
    <property type="term" value="F:manganese ion binding"/>
    <property type="evidence" value="ECO:0007669"/>
    <property type="project" value="UniProtKB-UniRule"/>
</dbReference>
<dbReference type="GO" id="GO:0019556">
    <property type="term" value="P:L-histidine catabolic process to glutamate and formamide"/>
    <property type="evidence" value="ECO:0007669"/>
    <property type="project" value="UniProtKB-UniPathway"/>
</dbReference>
<dbReference type="GO" id="GO:0019557">
    <property type="term" value="P:L-histidine catabolic process to glutamate and formate"/>
    <property type="evidence" value="ECO:0007669"/>
    <property type="project" value="UniProtKB-UniPathway"/>
</dbReference>
<dbReference type="GO" id="GO:0033389">
    <property type="term" value="P:putrescine biosynthetic process from arginine, via agmatine"/>
    <property type="evidence" value="ECO:0007669"/>
    <property type="project" value="TreeGrafter"/>
</dbReference>
<dbReference type="CDD" id="cd09988">
    <property type="entry name" value="Formimidoylglutamase"/>
    <property type="match status" value="1"/>
</dbReference>
<dbReference type="Gene3D" id="3.40.800.10">
    <property type="entry name" value="Ureohydrolase domain"/>
    <property type="match status" value="1"/>
</dbReference>
<dbReference type="HAMAP" id="MF_00737">
    <property type="entry name" value="Formimidoylglutam"/>
    <property type="match status" value="1"/>
</dbReference>
<dbReference type="InterPro" id="IPR005923">
    <property type="entry name" value="HutG"/>
</dbReference>
<dbReference type="InterPro" id="IPR006035">
    <property type="entry name" value="Ureohydrolase"/>
</dbReference>
<dbReference type="InterPro" id="IPR023696">
    <property type="entry name" value="Ureohydrolase_dom_sf"/>
</dbReference>
<dbReference type="NCBIfam" id="NF010347">
    <property type="entry name" value="PRK13775.1"/>
    <property type="match status" value="1"/>
</dbReference>
<dbReference type="PANTHER" id="PTHR11358">
    <property type="entry name" value="ARGINASE/AGMATINASE"/>
    <property type="match status" value="1"/>
</dbReference>
<dbReference type="PANTHER" id="PTHR11358:SF35">
    <property type="entry name" value="FORMIMIDOYLGLUTAMASE"/>
    <property type="match status" value="1"/>
</dbReference>
<dbReference type="Pfam" id="PF00491">
    <property type="entry name" value="Arginase"/>
    <property type="match status" value="1"/>
</dbReference>
<dbReference type="PIRSF" id="PIRSF036979">
    <property type="entry name" value="Arginase"/>
    <property type="match status" value="1"/>
</dbReference>
<dbReference type="PRINTS" id="PR00116">
    <property type="entry name" value="ARGINASE"/>
</dbReference>
<dbReference type="SUPFAM" id="SSF52768">
    <property type="entry name" value="Arginase/deacetylase"/>
    <property type="match status" value="1"/>
</dbReference>
<dbReference type="PROSITE" id="PS51409">
    <property type="entry name" value="ARGINASE_2"/>
    <property type="match status" value="1"/>
</dbReference>
<feature type="chain" id="PRO_1000133013" description="Formimidoylglutamase">
    <location>
        <begin position="1"/>
        <end position="328"/>
    </location>
</feature>
<feature type="binding site" evidence="1">
    <location>
        <position position="133"/>
    </location>
    <ligand>
        <name>Mn(2+)</name>
        <dbReference type="ChEBI" id="CHEBI:29035"/>
        <label>1</label>
    </ligand>
</feature>
<feature type="binding site" evidence="1">
    <location>
        <position position="159"/>
    </location>
    <ligand>
        <name>Mn(2+)</name>
        <dbReference type="ChEBI" id="CHEBI:29035"/>
        <label>1</label>
    </ligand>
</feature>
<feature type="binding site" evidence="1">
    <location>
        <position position="159"/>
    </location>
    <ligand>
        <name>Mn(2+)</name>
        <dbReference type="ChEBI" id="CHEBI:29035"/>
        <label>2</label>
    </ligand>
</feature>
<feature type="binding site" evidence="1">
    <location>
        <position position="161"/>
    </location>
    <ligand>
        <name>Mn(2+)</name>
        <dbReference type="ChEBI" id="CHEBI:29035"/>
        <label>2</label>
    </ligand>
</feature>
<feature type="binding site" evidence="1">
    <location>
        <position position="163"/>
    </location>
    <ligand>
        <name>Mn(2+)</name>
        <dbReference type="ChEBI" id="CHEBI:29035"/>
        <label>1</label>
    </ligand>
</feature>
<feature type="binding site" evidence="1">
    <location>
        <position position="253"/>
    </location>
    <ligand>
        <name>Mn(2+)</name>
        <dbReference type="ChEBI" id="CHEBI:29035"/>
        <label>1</label>
    </ligand>
</feature>
<feature type="binding site" evidence="1">
    <location>
        <position position="253"/>
    </location>
    <ligand>
        <name>Mn(2+)</name>
        <dbReference type="ChEBI" id="CHEBI:29035"/>
        <label>2</label>
    </ligand>
</feature>
<feature type="binding site" evidence="1">
    <location>
        <position position="255"/>
    </location>
    <ligand>
        <name>Mn(2+)</name>
        <dbReference type="ChEBI" id="CHEBI:29035"/>
        <label>2</label>
    </ligand>
</feature>
<reference key="1">
    <citation type="journal article" date="2008" name="J. Bacteriol.">
        <title>Genome sequence of a nephritogenic and highly transformable M49 strain of Streptococcus pyogenes.</title>
        <authorList>
            <person name="McShan W.M."/>
            <person name="Ferretti J.J."/>
            <person name="Karasawa T."/>
            <person name="Suvorov A.N."/>
            <person name="Lin S."/>
            <person name="Qin B."/>
            <person name="Jia H."/>
            <person name="Kenton S."/>
            <person name="Najar F."/>
            <person name="Wu H."/>
            <person name="Scott J."/>
            <person name="Roe B.A."/>
            <person name="Savic D.J."/>
        </authorList>
    </citation>
    <scope>NUCLEOTIDE SEQUENCE [LARGE SCALE GENOMIC DNA]</scope>
    <source>
        <strain>NZ131</strain>
    </source>
</reference>
<comment type="function">
    <text evidence="1">Catalyzes the conversion of N-formimidoyl-L-glutamate to L-glutamate and formamide.</text>
</comment>
<comment type="catalytic activity">
    <reaction evidence="1">
        <text>N-formimidoyl-L-glutamate + H2O = formamide + L-glutamate</text>
        <dbReference type="Rhea" id="RHEA:22492"/>
        <dbReference type="ChEBI" id="CHEBI:15377"/>
        <dbReference type="ChEBI" id="CHEBI:16397"/>
        <dbReference type="ChEBI" id="CHEBI:29985"/>
        <dbReference type="ChEBI" id="CHEBI:58928"/>
        <dbReference type="EC" id="3.5.3.8"/>
    </reaction>
</comment>
<comment type="cofactor">
    <cofactor evidence="1">
        <name>Mn(2+)</name>
        <dbReference type="ChEBI" id="CHEBI:29035"/>
    </cofactor>
    <text evidence="1">Binds 2 manganese ions per subunit.</text>
</comment>
<comment type="pathway">
    <text evidence="1">Amino-acid degradation; L-histidine degradation into L-glutamate; L-glutamate from N-formimidoyl-L-glutamate (hydrolase route): step 1/1.</text>
</comment>
<comment type="similarity">
    <text evidence="1">Belongs to the arginase family.</text>
</comment>
<name>HUTG_STRPZ</name>
<organism>
    <name type="scientific">Streptococcus pyogenes serotype M49 (strain NZ131)</name>
    <dbReference type="NCBI Taxonomy" id="471876"/>
    <lineage>
        <taxon>Bacteria</taxon>
        <taxon>Bacillati</taxon>
        <taxon>Bacillota</taxon>
        <taxon>Bacilli</taxon>
        <taxon>Lactobacillales</taxon>
        <taxon>Streptococcaceae</taxon>
        <taxon>Streptococcus</taxon>
    </lineage>
</organism>
<keyword id="KW-0369">Histidine metabolism</keyword>
<keyword id="KW-0378">Hydrolase</keyword>
<keyword id="KW-0464">Manganese</keyword>
<keyword id="KW-0479">Metal-binding</keyword>
<protein>
    <recommendedName>
        <fullName evidence="1">Formimidoylglutamase</fullName>
        <ecNumber evidence="1">3.5.3.8</ecNumber>
    </recommendedName>
    <alternativeName>
        <fullName evidence="1">Formiminoglutamase</fullName>
    </alternativeName>
    <alternativeName>
        <fullName evidence="1">Formiminoglutamate hydrolase</fullName>
    </alternativeName>
</protein>
<sequence length="328" mass="36326">MLEDYYPSTTSYYHGGIDDDLYTAKWGMVMTFLDLNDSSLTPFEGTHFALIGFKSDKGVYINNGRVGAVESPAAIRTQLAKFPWHLGNQVMVYDVGNIDGPNRSLEQLQNSLSKAIKRMCDLNLKPIVLGGGHETAYGHYLGLRQSLSPSDDLAVINMDAHFDLRPYDQTGPNSGTGFRQMFDDAVADKRLFKYFVLGIQEHNNNLFLFDFVAKSKGIQFLTGQDIYQMGHQKVCRAIDRFLEGQERVYLTIDMDCFSVGAAPGVSAIQSLGVDPNLAVLVLQHIAASGKLVGFDVVEVSPPHDIDNHTANLAATFIFYLVQIMAQHS</sequence>
<proteinExistence type="inferred from homology"/>
<gene>
    <name evidence="1" type="primary">hutG</name>
    <name type="ordered locus">Spy49_1731</name>
</gene>
<evidence type="ECO:0000255" key="1">
    <source>
        <dbReference type="HAMAP-Rule" id="MF_00737"/>
    </source>
</evidence>
<accession>B5XIY3</accession>